<gene>
    <name evidence="1" type="primary">tyrS</name>
    <name type="ordered locus">M1425_2042</name>
</gene>
<feature type="chain" id="PRO_1000216403" description="Tyrosine--tRNA ligase">
    <location>
        <begin position="1"/>
        <end position="361"/>
    </location>
</feature>
<feature type="short sequence motif" description="'KMSKS' region">
    <location>
        <begin position="236"/>
        <end position="240"/>
    </location>
</feature>
<feature type="binding site" evidence="1">
    <location>
        <position position="36"/>
    </location>
    <ligand>
        <name>L-tyrosine</name>
        <dbReference type="ChEBI" id="CHEBI:58315"/>
    </ligand>
</feature>
<feature type="binding site" evidence="1">
    <location>
        <position position="162"/>
    </location>
    <ligand>
        <name>L-tyrosine</name>
        <dbReference type="ChEBI" id="CHEBI:58315"/>
    </ligand>
</feature>
<feature type="binding site" evidence="1">
    <location>
        <position position="166"/>
    </location>
    <ligand>
        <name>L-tyrosine</name>
        <dbReference type="ChEBI" id="CHEBI:58315"/>
    </ligand>
</feature>
<feature type="binding site" evidence="1">
    <location>
        <position position="169"/>
    </location>
    <ligand>
        <name>L-tyrosine</name>
        <dbReference type="ChEBI" id="CHEBI:58315"/>
    </ligand>
</feature>
<feature type="binding site" evidence="1">
    <location>
        <position position="184"/>
    </location>
    <ligand>
        <name>L-tyrosine</name>
        <dbReference type="ChEBI" id="CHEBI:58315"/>
    </ligand>
</feature>
<feature type="binding site" evidence="1">
    <location>
        <position position="239"/>
    </location>
    <ligand>
        <name>ATP</name>
        <dbReference type="ChEBI" id="CHEBI:30616"/>
    </ligand>
</feature>
<accession>C3MYZ9</accession>
<reference key="1">
    <citation type="journal article" date="2009" name="Proc. Natl. Acad. Sci. U.S.A.">
        <title>Biogeography of the Sulfolobus islandicus pan-genome.</title>
        <authorList>
            <person name="Reno M.L."/>
            <person name="Held N.L."/>
            <person name="Fields C.J."/>
            <person name="Burke P.V."/>
            <person name="Whitaker R.J."/>
        </authorList>
    </citation>
    <scope>NUCLEOTIDE SEQUENCE [LARGE SCALE GENOMIC DNA]</scope>
    <source>
        <strain>M.14.25 / Kamchatka #1</strain>
    </source>
</reference>
<proteinExistence type="inferred from homology"/>
<dbReference type="EC" id="6.1.1.1" evidence="1"/>
<dbReference type="EMBL" id="CP001400">
    <property type="protein sequence ID" value="ACP38783.1"/>
    <property type="molecule type" value="Genomic_DNA"/>
</dbReference>
<dbReference type="RefSeq" id="WP_012712009.1">
    <property type="nucleotide sequence ID" value="NC_012588.1"/>
</dbReference>
<dbReference type="SMR" id="C3MYZ9"/>
<dbReference type="KEGG" id="sia:M1425_2042"/>
<dbReference type="HOGENOM" id="CLU_035267_1_1_2"/>
<dbReference type="Proteomes" id="UP000001350">
    <property type="component" value="Chromosome"/>
</dbReference>
<dbReference type="GO" id="GO:0005737">
    <property type="term" value="C:cytoplasm"/>
    <property type="evidence" value="ECO:0007669"/>
    <property type="project" value="UniProtKB-SubCell"/>
</dbReference>
<dbReference type="GO" id="GO:0005524">
    <property type="term" value="F:ATP binding"/>
    <property type="evidence" value="ECO:0007669"/>
    <property type="project" value="UniProtKB-UniRule"/>
</dbReference>
<dbReference type="GO" id="GO:0004831">
    <property type="term" value="F:tyrosine-tRNA ligase activity"/>
    <property type="evidence" value="ECO:0007669"/>
    <property type="project" value="UniProtKB-UniRule"/>
</dbReference>
<dbReference type="GO" id="GO:0006437">
    <property type="term" value="P:tyrosyl-tRNA aminoacylation"/>
    <property type="evidence" value="ECO:0007669"/>
    <property type="project" value="UniProtKB-UniRule"/>
</dbReference>
<dbReference type="CDD" id="cd00805">
    <property type="entry name" value="TyrRS_core"/>
    <property type="match status" value="1"/>
</dbReference>
<dbReference type="Gene3D" id="3.40.50.620">
    <property type="entry name" value="HUPs"/>
    <property type="match status" value="1"/>
</dbReference>
<dbReference type="Gene3D" id="1.10.240.10">
    <property type="entry name" value="Tyrosyl-Transfer RNA Synthetase"/>
    <property type="match status" value="1"/>
</dbReference>
<dbReference type="HAMAP" id="MF_02009">
    <property type="entry name" value="Tyr_tRNA_synth_type4"/>
    <property type="match status" value="1"/>
</dbReference>
<dbReference type="InterPro" id="IPR002305">
    <property type="entry name" value="aa-tRNA-synth_Ic"/>
</dbReference>
<dbReference type="InterPro" id="IPR014729">
    <property type="entry name" value="Rossmann-like_a/b/a_fold"/>
</dbReference>
<dbReference type="InterPro" id="IPR002307">
    <property type="entry name" value="Tyr-tRNA-ligase"/>
</dbReference>
<dbReference type="InterPro" id="IPR023678">
    <property type="entry name" value="Tyr-tRNA-ligase_4"/>
</dbReference>
<dbReference type="InterPro" id="IPR023617">
    <property type="entry name" value="Tyr-tRNA-ligase_arc/euk-type"/>
</dbReference>
<dbReference type="InterPro" id="IPR050489">
    <property type="entry name" value="Tyr-tRNA_synthase"/>
</dbReference>
<dbReference type="NCBIfam" id="NF006330">
    <property type="entry name" value="PRK08560.1"/>
    <property type="match status" value="1"/>
</dbReference>
<dbReference type="NCBIfam" id="TIGR00234">
    <property type="entry name" value="tyrS"/>
    <property type="match status" value="1"/>
</dbReference>
<dbReference type="PANTHER" id="PTHR46264:SF4">
    <property type="entry name" value="TYROSINE--TRNA LIGASE, CYTOPLASMIC"/>
    <property type="match status" value="1"/>
</dbReference>
<dbReference type="PANTHER" id="PTHR46264">
    <property type="entry name" value="TYROSINE-TRNA LIGASE"/>
    <property type="match status" value="1"/>
</dbReference>
<dbReference type="Pfam" id="PF00579">
    <property type="entry name" value="tRNA-synt_1b"/>
    <property type="match status" value="1"/>
</dbReference>
<dbReference type="PIRSF" id="PIRSF006588">
    <property type="entry name" value="TyrRS_arch_euk"/>
    <property type="match status" value="1"/>
</dbReference>
<dbReference type="PRINTS" id="PR01040">
    <property type="entry name" value="TRNASYNTHTYR"/>
</dbReference>
<dbReference type="SUPFAM" id="SSF52374">
    <property type="entry name" value="Nucleotidylyl transferase"/>
    <property type="match status" value="1"/>
</dbReference>
<sequence length="361" mass="41296">MSIDQRLQLITRNAAEIITIDELRKKLESEEKLKGYIGFEPSGLFHIGWLIWTQKVKDLVEAGVNMTLLRATWHAWINDKLGGDLSLIKMAADYTVEVIKNYGVDTTKLNIVDADDMVKEKDYWALVIKVAKNSSLARIKRALTIMGRRAEEAEIDASKLIYPAMQVSDIFYLDLDIALGGTDQRKAHMLARDVAEKMGKKKIVSIHTPLLVGLQGGQRMSITEGMEEDDIQAEIKMSKSKPESAIFVSDSREDVERKIMGAYCPKGVAENNPILQILKYIIFPRYNFVKIERDIRYGGDVEFKDYEELERAYIEGKIHPMDLKKATARRLNEILEPIRKSLERKPEFEEMIQKISKSVTR</sequence>
<evidence type="ECO:0000255" key="1">
    <source>
        <dbReference type="HAMAP-Rule" id="MF_02009"/>
    </source>
</evidence>
<comment type="function">
    <text evidence="1">Catalyzes the attachment of tyrosine to tRNA(Tyr) in a two-step reaction: tyrosine is first activated by ATP to form Tyr-AMP and then transferred to the acceptor end of tRNA(Tyr).</text>
</comment>
<comment type="catalytic activity">
    <reaction evidence="1">
        <text>tRNA(Tyr) + L-tyrosine + ATP = L-tyrosyl-tRNA(Tyr) + AMP + diphosphate + H(+)</text>
        <dbReference type="Rhea" id="RHEA:10220"/>
        <dbReference type="Rhea" id="RHEA-COMP:9706"/>
        <dbReference type="Rhea" id="RHEA-COMP:9707"/>
        <dbReference type="ChEBI" id="CHEBI:15378"/>
        <dbReference type="ChEBI" id="CHEBI:30616"/>
        <dbReference type="ChEBI" id="CHEBI:33019"/>
        <dbReference type="ChEBI" id="CHEBI:58315"/>
        <dbReference type="ChEBI" id="CHEBI:78442"/>
        <dbReference type="ChEBI" id="CHEBI:78536"/>
        <dbReference type="ChEBI" id="CHEBI:456215"/>
        <dbReference type="EC" id="6.1.1.1"/>
    </reaction>
</comment>
<comment type="subunit">
    <text evidence="1">Homodimer.</text>
</comment>
<comment type="subcellular location">
    <subcellularLocation>
        <location evidence="1">Cytoplasm</location>
    </subcellularLocation>
</comment>
<comment type="similarity">
    <text evidence="1">Belongs to the class-I aminoacyl-tRNA synthetase family. TyrS type 4 subfamily.</text>
</comment>
<keyword id="KW-0030">Aminoacyl-tRNA synthetase</keyword>
<keyword id="KW-0067">ATP-binding</keyword>
<keyword id="KW-0963">Cytoplasm</keyword>
<keyword id="KW-0436">Ligase</keyword>
<keyword id="KW-0547">Nucleotide-binding</keyword>
<keyword id="KW-0648">Protein biosynthesis</keyword>
<organism>
    <name type="scientific">Saccharolobus islandicus (strain M.14.25 / Kamchatka #1)</name>
    <name type="common">Sulfolobus islandicus</name>
    <dbReference type="NCBI Taxonomy" id="427317"/>
    <lineage>
        <taxon>Archaea</taxon>
        <taxon>Thermoproteota</taxon>
        <taxon>Thermoprotei</taxon>
        <taxon>Sulfolobales</taxon>
        <taxon>Sulfolobaceae</taxon>
        <taxon>Saccharolobus</taxon>
    </lineage>
</organism>
<name>SYY_SACI4</name>
<protein>
    <recommendedName>
        <fullName evidence="1">Tyrosine--tRNA ligase</fullName>
        <ecNumber evidence="1">6.1.1.1</ecNumber>
    </recommendedName>
    <alternativeName>
        <fullName evidence="1">Tyrosyl-tRNA synthetase</fullName>
        <shortName evidence="1">TyrRS</shortName>
    </alternativeName>
</protein>